<name>UP01_ZINEL</name>
<organism>
    <name type="scientific">Zinnia elegans</name>
    <name type="common">Garden zinnia</name>
    <name type="synonym">Zinnia violacea</name>
    <dbReference type="NCBI Taxonomy" id="34245"/>
    <lineage>
        <taxon>Eukaryota</taxon>
        <taxon>Viridiplantae</taxon>
        <taxon>Streptophyta</taxon>
        <taxon>Embryophyta</taxon>
        <taxon>Tracheophyta</taxon>
        <taxon>Spermatophyta</taxon>
        <taxon>Magnoliopsida</taxon>
        <taxon>eudicotyledons</taxon>
        <taxon>Gunneridae</taxon>
        <taxon>Pentapetalae</taxon>
        <taxon>asterids</taxon>
        <taxon>campanulids</taxon>
        <taxon>Asterales</taxon>
        <taxon>Asteraceae</taxon>
        <taxon>Asteroideae</taxon>
        <taxon>Heliantheae alliance</taxon>
        <taxon>Heliantheae</taxon>
        <taxon>Zinnia</taxon>
    </lineage>
</organism>
<keyword id="KW-0903">Direct protein sequencing</keyword>
<feature type="chain" id="PRO_0000318124" description="Unknown protein 1">
    <location>
        <begin position="1" status="less than"/>
        <end position="10" status="greater than"/>
    </location>
</feature>
<feature type="unsure residue" description="I or L">
    <location>
        <position position="9"/>
    </location>
</feature>
<feature type="non-terminal residue">
    <location>
        <position position="1"/>
    </location>
</feature>
<feature type="non-terminal residue">
    <location>
        <position position="10"/>
    </location>
</feature>
<accession>P85422</accession>
<proteinExistence type="evidence at protein level"/>
<evidence type="ECO:0000305" key="1"/>
<reference evidence="1" key="1">
    <citation type="submission" date="2008-01" db="UniProtKB">
        <authorList>
            <person name="Gabaldon C."/>
            <person name="Gomez Ros L.V."/>
            <person name="Novo Uzal E."/>
            <person name="Ros Barcelo A."/>
        </authorList>
    </citation>
    <scope>PROTEIN SEQUENCE</scope>
    <source>
        <strain>cv. Envy</strain>
        <tissue>Callus</tissue>
    </source>
</reference>
<protein>
    <recommendedName>
        <fullName>Unknown protein 1</fullName>
    </recommendedName>
</protein>
<sequence>GTXXXITIIR</sequence>